<name>SFSA_ALIFM</name>
<evidence type="ECO:0000255" key="1">
    <source>
        <dbReference type="HAMAP-Rule" id="MF_00095"/>
    </source>
</evidence>
<organism>
    <name type="scientific">Aliivibrio fischeri (strain MJ11)</name>
    <name type="common">Vibrio fischeri</name>
    <dbReference type="NCBI Taxonomy" id="388396"/>
    <lineage>
        <taxon>Bacteria</taxon>
        <taxon>Pseudomonadati</taxon>
        <taxon>Pseudomonadota</taxon>
        <taxon>Gammaproteobacteria</taxon>
        <taxon>Vibrionales</taxon>
        <taxon>Vibrionaceae</taxon>
        <taxon>Aliivibrio</taxon>
    </lineage>
</organism>
<accession>B5FAP6</accession>
<feature type="chain" id="PRO_1000093599" description="Sugar fermentation stimulation protein homolog">
    <location>
        <begin position="1"/>
        <end position="235"/>
    </location>
</feature>
<sequence>MKFEPELESGKLIKRYKRFLADIKLEDNSERTIHCANTGAMTGCAEPDSTVFFSTSSNLKRKYPNSWELSVTENNHTICVNTLRANQLVVEAIQEQNIKELTEYDELKTEVKYGSENSRIDILLTGKSLPDCYIEVKSVTLLSESGQGFFPDAVTTRGQKHLRELSEMAQLGHKAVLFFAVLHSGIEKVSIAHHIDQQYHSLLIDAIENGVNILCYQAEMSSKEMKIVRKLPFSI</sequence>
<proteinExistence type="inferred from homology"/>
<comment type="similarity">
    <text evidence="1">Belongs to the SfsA family.</text>
</comment>
<dbReference type="EMBL" id="CP001139">
    <property type="protein sequence ID" value="ACH65247.1"/>
    <property type="molecule type" value="Genomic_DNA"/>
</dbReference>
<dbReference type="RefSeq" id="WP_012532920.1">
    <property type="nucleotide sequence ID" value="NC_011184.1"/>
</dbReference>
<dbReference type="SMR" id="B5FAP6"/>
<dbReference type="KEGG" id="vfm:VFMJ11_2278"/>
<dbReference type="HOGENOM" id="CLU_052299_2_0_6"/>
<dbReference type="Proteomes" id="UP000001857">
    <property type="component" value="Chromosome I"/>
</dbReference>
<dbReference type="GO" id="GO:0003677">
    <property type="term" value="F:DNA binding"/>
    <property type="evidence" value="ECO:0007669"/>
    <property type="project" value="InterPro"/>
</dbReference>
<dbReference type="CDD" id="cd22359">
    <property type="entry name" value="SfsA-like_bacterial"/>
    <property type="match status" value="1"/>
</dbReference>
<dbReference type="FunFam" id="2.40.50.580:FF:000001">
    <property type="entry name" value="Sugar fermentation stimulation protein A"/>
    <property type="match status" value="1"/>
</dbReference>
<dbReference type="FunFam" id="3.40.1350.60:FF:000001">
    <property type="entry name" value="Sugar fermentation stimulation protein A"/>
    <property type="match status" value="1"/>
</dbReference>
<dbReference type="Gene3D" id="2.40.50.580">
    <property type="match status" value="1"/>
</dbReference>
<dbReference type="Gene3D" id="3.40.1350.60">
    <property type="match status" value="1"/>
</dbReference>
<dbReference type="HAMAP" id="MF_00095">
    <property type="entry name" value="SfsA"/>
    <property type="match status" value="1"/>
</dbReference>
<dbReference type="InterPro" id="IPR005224">
    <property type="entry name" value="SfsA"/>
</dbReference>
<dbReference type="InterPro" id="IPR040452">
    <property type="entry name" value="SfsA_C"/>
</dbReference>
<dbReference type="InterPro" id="IPR041465">
    <property type="entry name" value="SfsA_N"/>
</dbReference>
<dbReference type="NCBIfam" id="TIGR00230">
    <property type="entry name" value="sfsA"/>
    <property type="match status" value="1"/>
</dbReference>
<dbReference type="PANTHER" id="PTHR30545">
    <property type="entry name" value="SUGAR FERMENTATION STIMULATION PROTEIN A"/>
    <property type="match status" value="1"/>
</dbReference>
<dbReference type="PANTHER" id="PTHR30545:SF2">
    <property type="entry name" value="SUGAR FERMENTATION STIMULATION PROTEIN A"/>
    <property type="match status" value="1"/>
</dbReference>
<dbReference type="Pfam" id="PF03749">
    <property type="entry name" value="SfsA"/>
    <property type="match status" value="1"/>
</dbReference>
<dbReference type="Pfam" id="PF17746">
    <property type="entry name" value="SfsA_N"/>
    <property type="match status" value="1"/>
</dbReference>
<gene>
    <name evidence="1" type="primary">sfsA</name>
    <name type="ordered locus">VFMJ11_2278</name>
</gene>
<reference key="1">
    <citation type="submission" date="2008-08" db="EMBL/GenBank/DDBJ databases">
        <title>Complete sequence of Vibrio fischeri strain MJ11.</title>
        <authorList>
            <person name="Mandel M.J."/>
            <person name="Stabb E.V."/>
            <person name="Ruby E.G."/>
            <person name="Ferriera S."/>
            <person name="Johnson J."/>
            <person name="Kravitz S."/>
            <person name="Beeson K."/>
            <person name="Sutton G."/>
            <person name="Rogers Y.-H."/>
            <person name="Friedman R."/>
            <person name="Frazier M."/>
            <person name="Venter J.C."/>
        </authorList>
    </citation>
    <scope>NUCLEOTIDE SEQUENCE [LARGE SCALE GENOMIC DNA]</scope>
    <source>
        <strain>MJ11</strain>
    </source>
</reference>
<protein>
    <recommendedName>
        <fullName evidence="1">Sugar fermentation stimulation protein homolog</fullName>
    </recommendedName>
</protein>